<comment type="function">
    <text evidence="1">Catalyzes the cofactor-independent reversible oxidation of gamma-hydroxybutyrate (GHB) to succinic semialdehyde (SSA) coupled to reduction of 2-ketoglutarate (2-KG) to D-2-hydroxyglutarate (D-2-HG). L-3-hydroxybutyrate (L-3-OHB) is also a substrate for HOT when using 2-KG as hydrogen acceptor, resulting in the formation of D-2-HG (By similarity).</text>
</comment>
<comment type="catalytic activity">
    <reaction>
        <text>(S)-3-hydroxybutanoate + 2-oxoglutarate = (R)-2-hydroxyglutarate + acetoacetate</text>
        <dbReference type="Rhea" id="RHEA:23048"/>
        <dbReference type="ChEBI" id="CHEBI:11047"/>
        <dbReference type="ChEBI" id="CHEBI:13705"/>
        <dbReference type="ChEBI" id="CHEBI:15801"/>
        <dbReference type="ChEBI" id="CHEBI:16810"/>
        <dbReference type="EC" id="1.1.99.24"/>
    </reaction>
</comment>
<comment type="catalytic activity">
    <reaction>
        <text>4-hydroxybutanoate + 2-oxoglutarate = (R)-2-hydroxyglutarate + succinate semialdehyde</text>
        <dbReference type="Rhea" id="RHEA:24734"/>
        <dbReference type="ChEBI" id="CHEBI:15801"/>
        <dbReference type="ChEBI" id="CHEBI:16724"/>
        <dbReference type="ChEBI" id="CHEBI:16810"/>
        <dbReference type="ChEBI" id="CHEBI:57706"/>
        <dbReference type="EC" id="1.1.99.24"/>
    </reaction>
</comment>
<comment type="subcellular location">
    <subcellularLocation>
        <location evidence="1">Mitochondrion</location>
    </subcellularLocation>
</comment>
<comment type="similarity">
    <text evidence="3">Belongs to the iron-containing alcohol dehydrogenase family. Hydroxyacid-oxoacid transhydrogenase subfamily.</text>
</comment>
<evidence type="ECO:0000250" key="1"/>
<evidence type="ECO:0000255" key="2"/>
<evidence type="ECO:0000305" key="3"/>
<gene>
    <name type="ORF">AAEL003729</name>
</gene>
<accession>Q17EN4</accession>
<dbReference type="EC" id="1.1.99.24"/>
<dbReference type="EMBL" id="CH477280">
    <property type="protein sequence ID" value="EAT44958.1"/>
    <property type="molecule type" value="Genomic_DNA"/>
</dbReference>
<dbReference type="RefSeq" id="XP_001664064.1">
    <property type="nucleotide sequence ID" value="XM_001664014.1"/>
</dbReference>
<dbReference type="SMR" id="Q17EN4"/>
<dbReference type="FunCoup" id="Q17EN4">
    <property type="interactions" value="224"/>
</dbReference>
<dbReference type="STRING" id="7159.Q17EN4"/>
<dbReference type="PaxDb" id="7159-AAEL003729-PB"/>
<dbReference type="GeneID" id="5578877"/>
<dbReference type="KEGG" id="aag:5578877"/>
<dbReference type="CTD" id="37551"/>
<dbReference type="VEuPathDB" id="VectorBase:AAEL003729"/>
<dbReference type="eggNOG" id="KOG3857">
    <property type="taxonomic scope" value="Eukaryota"/>
</dbReference>
<dbReference type="InParanoid" id="Q17EN4"/>
<dbReference type="OMA" id="NLMGAGC"/>
<dbReference type="OrthoDB" id="339764at2759"/>
<dbReference type="PhylomeDB" id="Q17EN4"/>
<dbReference type="Proteomes" id="UP000008820">
    <property type="component" value="Unassembled WGS sequence"/>
</dbReference>
<dbReference type="Proteomes" id="UP000682892">
    <property type="component" value="Chromosome 2"/>
</dbReference>
<dbReference type="GO" id="GO:0005739">
    <property type="term" value="C:mitochondrion"/>
    <property type="evidence" value="ECO:0000250"/>
    <property type="project" value="UniProtKB"/>
</dbReference>
<dbReference type="GO" id="GO:0004022">
    <property type="term" value="F:alcohol dehydrogenase (NAD+) activity"/>
    <property type="evidence" value="ECO:0007669"/>
    <property type="project" value="InterPro"/>
</dbReference>
<dbReference type="GO" id="GO:0047988">
    <property type="term" value="F:hydroxyacid-oxoacid transhydrogenase activity"/>
    <property type="evidence" value="ECO:0000250"/>
    <property type="project" value="UniProtKB"/>
</dbReference>
<dbReference type="GO" id="GO:0046872">
    <property type="term" value="F:metal ion binding"/>
    <property type="evidence" value="ECO:0007669"/>
    <property type="project" value="InterPro"/>
</dbReference>
<dbReference type="GO" id="GO:0019552">
    <property type="term" value="P:glutamate catabolic process via 2-hydroxyglutarate"/>
    <property type="evidence" value="ECO:0000250"/>
    <property type="project" value="UniProtKB"/>
</dbReference>
<dbReference type="CDD" id="cd08190">
    <property type="entry name" value="HOT"/>
    <property type="match status" value="1"/>
</dbReference>
<dbReference type="FunFam" id="1.20.1090.10:FF:000003">
    <property type="entry name" value="Probable hydroxyacid-oxoacid transhydrogenase, mitochondrial"/>
    <property type="match status" value="1"/>
</dbReference>
<dbReference type="FunFam" id="3.40.50.1970:FF:000010">
    <property type="entry name" value="Probable hydroxyacid-oxoacid transhydrogenase, mitochondrial"/>
    <property type="match status" value="1"/>
</dbReference>
<dbReference type="Gene3D" id="3.40.50.1970">
    <property type="match status" value="1"/>
</dbReference>
<dbReference type="Gene3D" id="1.20.1090.10">
    <property type="entry name" value="Dehydroquinate synthase-like - alpha domain"/>
    <property type="match status" value="1"/>
</dbReference>
<dbReference type="InterPro" id="IPR001670">
    <property type="entry name" value="ADH_Fe/GldA"/>
</dbReference>
<dbReference type="InterPro" id="IPR056798">
    <property type="entry name" value="ADH_Fe_C"/>
</dbReference>
<dbReference type="InterPro" id="IPR039697">
    <property type="entry name" value="Alcohol_dehydrogenase_Fe"/>
</dbReference>
<dbReference type="InterPro" id="IPR042157">
    <property type="entry name" value="HOT"/>
</dbReference>
<dbReference type="PANTHER" id="PTHR11496">
    <property type="entry name" value="ALCOHOL DEHYDROGENASE"/>
    <property type="match status" value="1"/>
</dbReference>
<dbReference type="PANTHER" id="PTHR11496:SF83">
    <property type="entry name" value="HYDROXYACID-OXOACID TRANSHYDROGENASE, MITOCHONDRIAL"/>
    <property type="match status" value="1"/>
</dbReference>
<dbReference type="Pfam" id="PF25137">
    <property type="entry name" value="ADH_Fe_C"/>
    <property type="match status" value="1"/>
</dbReference>
<dbReference type="Pfam" id="PF00465">
    <property type="entry name" value="Fe-ADH"/>
    <property type="match status" value="1"/>
</dbReference>
<dbReference type="SUPFAM" id="SSF56796">
    <property type="entry name" value="Dehydroquinate synthase-like"/>
    <property type="match status" value="1"/>
</dbReference>
<proteinExistence type="inferred from homology"/>
<organism>
    <name type="scientific">Aedes aegypti</name>
    <name type="common">Yellowfever mosquito</name>
    <name type="synonym">Culex aegypti</name>
    <dbReference type="NCBI Taxonomy" id="7159"/>
    <lineage>
        <taxon>Eukaryota</taxon>
        <taxon>Metazoa</taxon>
        <taxon>Ecdysozoa</taxon>
        <taxon>Arthropoda</taxon>
        <taxon>Hexapoda</taxon>
        <taxon>Insecta</taxon>
        <taxon>Pterygota</taxon>
        <taxon>Neoptera</taxon>
        <taxon>Endopterygota</taxon>
        <taxon>Diptera</taxon>
        <taxon>Nematocera</taxon>
        <taxon>Culicoidea</taxon>
        <taxon>Culicidae</taxon>
        <taxon>Culicinae</taxon>
        <taxon>Aedini</taxon>
        <taxon>Aedes</taxon>
        <taxon>Stegomyia</taxon>
    </lineage>
</organism>
<sequence length="462" mass="50140">MMSKARISSLMKVISSGSCSCPAHSRSSTGGLNVSSENEYAFEMSSSTIRYGPGVSKELGHDLQNLNAKNVCIVTDRNVAKLNSVKVAFDSLTRCGIQYQVYDETRVEPTDQSLLHAAEYARQNKFDSFVAIGGGSVIDTCKVANLFSADREAEFLDYVNAPIGKAKEVNVKLKPLIAVPTTAGTGSETTGVVIFDYKPLHAKTGISSKYLRPQLGLIDPLHTLSQPEKVAAYCGFDVFCHALESFTAIPYTERGSAPMNPNLRPPYQGSNPISDVWARFALKIIRENFISAVFNQDDLKARSNMHLASTMAGVGFGNAGVHLCHGLSYPISGHVKKFVPDGYSGDHPIIPHGLSVVMTAPAVFKFTAASCPERHLEAAELLGANVSKANRNDAGSILSDVVRQYMYKLKIENGLDSLGFTRDDIQSLVKGTLPQERITKLAPRAQTEEDLASLFENSMTVY</sequence>
<feature type="transit peptide" description="Mitochondrion" evidence="2">
    <location>
        <begin position="1"/>
        <end status="unknown"/>
    </location>
</feature>
<feature type="chain" id="PRO_0000323003" description="Probable hydroxyacid-oxoacid transhydrogenase, mitochondrial">
    <location>
        <begin status="unknown"/>
        <end position="462"/>
    </location>
</feature>
<protein>
    <recommendedName>
        <fullName>Probable hydroxyacid-oxoacid transhydrogenase, mitochondrial</fullName>
        <shortName>HOT</shortName>
        <ecNumber>1.1.99.24</ecNumber>
    </recommendedName>
</protein>
<reference key="1">
    <citation type="journal article" date="2007" name="Science">
        <title>Genome sequence of Aedes aegypti, a major arbovirus vector.</title>
        <authorList>
            <person name="Nene V."/>
            <person name="Wortman J.R."/>
            <person name="Lawson D."/>
            <person name="Haas B.J."/>
            <person name="Kodira C.D."/>
            <person name="Tu Z.J."/>
            <person name="Loftus B.J."/>
            <person name="Xi Z."/>
            <person name="Megy K."/>
            <person name="Grabherr M."/>
            <person name="Ren Q."/>
            <person name="Zdobnov E.M."/>
            <person name="Lobo N.F."/>
            <person name="Campbell K.S."/>
            <person name="Brown S.E."/>
            <person name="Bonaldo M.F."/>
            <person name="Zhu J."/>
            <person name="Sinkins S.P."/>
            <person name="Hogenkamp D.G."/>
            <person name="Amedeo P."/>
            <person name="Arensburger P."/>
            <person name="Atkinson P.W."/>
            <person name="Bidwell S.L."/>
            <person name="Biedler J."/>
            <person name="Birney E."/>
            <person name="Bruggner R.V."/>
            <person name="Costas J."/>
            <person name="Coy M.R."/>
            <person name="Crabtree J."/>
            <person name="Crawford M."/>
            <person name="DeBruyn B."/>
            <person name="DeCaprio D."/>
            <person name="Eiglmeier K."/>
            <person name="Eisenstadt E."/>
            <person name="El-Dorry H."/>
            <person name="Gelbart W.M."/>
            <person name="Gomes S.L."/>
            <person name="Hammond M."/>
            <person name="Hannick L.I."/>
            <person name="Hogan J.R."/>
            <person name="Holmes M.H."/>
            <person name="Jaffe D."/>
            <person name="Johnston S.J."/>
            <person name="Kennedy R.C."/>
            <person name="Koo H."/>
            <person name="Kravitz S."/>
            <person name="Kriventseva E.V."/>
            <person name="Kulp D."/>
            <person name="Labutti K."/>
            <person name="Lee E."/>
            <person name="Li S."/>
            <person name="Lovin D.D."/>
            <person name="Mao C."/>
            <person name="Mauceli E."/>
            <person name="Menck C.F."/>
            <person name="Miller J.R."/>
            <person name="Montgomery P."/>
            <person name="Mori A."/>
            <person name="Nascimento A.L."/>
            <person name="Naveira H.F."/>
            <person name="Nusbaum C."/>
            <person name="O'Leary S.B."/>
            <person name="Orvis J."/>
            <person name="Pertea M."/>
            <person name="Quesneville H."/>
            <person name="Reidenbach K.R."/>
            <person name="Rogers Y.-H.C."/>
            <person name="Roth C.W."/>
            <person name="Schneider J.R."/>
            <person name="Schatz M."/>
            <person name="Shumway M."/>
            <person name="Stanke M."/>
            <person name="Stinson E.O."/>
            <person name="Tubio J.M.C."/>
            <person name="Vanzee J.P."/>
            <person name="Verjovski-Almeida S."/>
            <person name="Werner D."/>
            <person name="White O.R."/>
            <person name="Wyder S."/>
            <person name="Zeng Q."/>
            <person name="Zhao Q."/>
            <person name="Zhao Y."/>
            <person name="Hill C.A."/>
            <person name="Raikhel A.S."/>
            <person name="Soares M.B."/>
            <person name="Knudson D.L."/>
            <person name="Lee N.H."/>
            <person name="Galagan J."/>
            <person name="Salzberg S.L."/>
            <person name="Paulsen I.T."/>
            <person name="Dimopoulos G."/>
            <person name="Collins F.H."/>
            <person name="Bruce B."/>
            <person name="Fraser-Liggett C.M."/>
            <person name="Severson D.W."/>
        </authorList>
    </citation>
    <scope>NUCLEOTIDE SEQUENCE [LARGE SCALE GENOMIC DNA]</scope>
    <source>
        <strain>LVPib12</strain>
    </source>
</reference>
<name>HOT_AEDAE</name>
<keyword id="KW-0496">Mitochondrion</keyword>
<keyword id="KW-0560">Oxidoreductase</keyword>
<keyword id="KW-1185">Reference proteome</keyword>
<keyword id="KW-0809">Transit peptide</keyword>